<gene>
    <name evidence="1" type="primary">rbfA</name>
    <name type="ordered locus">lpp2819</name>
</gene>
<evidence type="ECO:0000255" key="1">
    <source>
        <dbReference type="HAMAP-Rule" id="MF_00003"/>
    </source>
</evidence>
<proteinExistence type="inferred from homology"/>
<accession>Q5X1C4</accession>
<dbReference type="EMBL" id="CR628336">
    <property type="protein sequence ID" value="CAH13972.1"/>
    <property type="molecule type" value="Genomic_DNA"/>
</dbReference>
<dbReference type="RefSeq" id="WP_010948461.1">
    <property type="nucleotide sequence ID" value="NC_006368.1"/>
</dbReference>
<dbReference type="SMR" id="Q5X1C4"/>
<dbReference type="GeneID" id="57036769"/>
<dbReference type="KEGG" id="lpp:lpp2819"/>
<dbReference type="LegioList" id="lpp2819"/>
<dbReference type="HOGENOM" id="CLU_089475_5_0_6"/>
<dbReference type="GO" id="GO:0005829">
    <property type="term" value="C:cytosol"/>
    <property type="evidence" value="ECO:0007669"/>
    <property type="project" value="TreeGrafter"/>
</dbReference>
<dbReference type="GO" id="GO:0043024">
    <property type="term" value="F:ribosomal small subunit binding"/>
    <property type="evidence" value="ECO:0007669"/>
    <property type="project" value="TreeGrafter"/>
</dbReference>
<dbReference type="GO" id="GO:0030490">
    <property type="term" value="P:maturation of SSU-rRNA"/>
    <property type="evidence" value="ECO:0007669"/>
    <property type="project" value="UniProtKB-UniRule"/>
</dbReference>
<dbReference type="Gene3D" id="3.30.300.20">
    <property type="match status" value="1"/>
</dbReference>
<dbReference type="HAMAP" id="MF_00003">
    <property type="entry name" value="RbfA"/>
    <property type="match status" value="1"/>
</dbReference>
<dbReference type="InterPro" id="IPR015946">
    <property type="entry name" value="KH_dom-like_a/b"/>
</dbReference>
<dbReference type="InterPro" id="IPR000238">
    <property type="entry name" value="RbfA"/>
</dbReference>
<dbReference type="InterPro" id="IPR023799">
    <property type="entry name" value="RbfA_dom_sf"/>
</dbReference>
<dbReference type="InterPro" id="IPR020053">
    <property type="entry name" value="Ribosome-bd_factorA_CS"/>
</dbReference>
<dbReference type="NCBIfam" id="TIGR00082">
    <property type="entry name" value="rbfA"/>
    <property type="match status" value="1"/>
</dbReference>
<dbReference type="PANTHER" id="PTHR33515">
    <property type="entry name" value="RIBOSOME-BINDING FACTOR A, CHLOROPLASTIC-RELATED"/>
    <property type="match status" value="1"/>
</dbReference>
<dbReference type="PANTHER" id="PTHR33515:SF1">
    <property type="entry name" value="RIBOSOME-BINDING FACTOR A, CHLOROPLASTIC-RELATED"/>
    <property type="match status" value="1"/>
</dbReference>
<dbReference type="Pfam" id="PF02033">
    <property type="entry name" value="RBFA"/>
    <property type="match status" value="1"/>
</dbReference>
<dbReference type="SUPFAM" id="SSF89919">
    <property type="entry name" value="Ribosome-binding factor A, RbfA"/>
    <property type="match status" value="1"/>
</dbReference>
<dbReference type="PROSITE" id="PS01319">
    <property type="entry name" value="RBFA"/>
    <property type="match status" value="1"/>
</dbReference>
<feature type="chain" id="PRO_0000102680" description="Ribosome-binding factor A">
    <location>
        <begin position="1"/>
        <end position="123"/>
    </location>
</feature>
<reference key="1">
    <citation type="journal article" date="2004" name="Nat. Genet.">
        <title>Evidence in the Legionella pneumophila genome for exploitation of host cell functions and high genome plasticity.</title>
        <authorList>
            <person name="Cazalet C."/>
            <person name="Rusniok C."/>
            <person name="Brueggemann H."/>
            <person name="Zidane N."/>
            <person name="Magnier A."/>
            <person name="Ma L."/>
            <person name="Tichit M."/>
            <person name="Jarraud S."/>
            <person name="Bouchier C."/>
            <person name="Vandenesch F."/>
            <person name="Kunst F."/>
            <person name="Etienne J."/>
            <person name="Glaser P."/>
            <person name="Buchrieser C."/>
        </authorList>
    </citation>
    <scope>NUCLEOTIDE SEQUENCE [LARGE SCALE GENOMIC DNA]</scope>
    <source>
        <strain>Paris</strain>
    </source>
</reference>
<protein>
    <recommendedName>
        <fullName evidence="1">Ribosome-binding factor A</fullName>
    </recommendedName>
</protein>
<keyword id="KW-0963">Cytoplasm</keyword>
<keyword id="KW-0690">Ribosome biogenesis</keyword>
<sequence length="123" mass="13833">MSNNFKRTDRIAEMIQRKLALIIPQEIKDPRLKGFVTISAVKVAADLGHAKIYFTVLNEDKSVVTNILNGAASYLRSALARSITLRTVPQLHFIYDESIEYGQRLSRLIDEVNPPDSSSDDNN</sequence>
<comment type="function">
    <text evidence="1">One of several proteins that assist in the late maturation steps of the functional core of the 30S ribosomal subunit. Associates with free 30S ribosomal subunits (but not with 30S subunits that are part of 70S ribosomes or polysomes). Required for efficient processing of 16S rRNA. May interact with the 5'-terminal helix region of 16S rRNA.</text>
</comment>
<comment type="subunit">
    <text evidence="1">Monomer. Binds 30S ribosomal subunits, but not 50S ribosomal subunits or 70S ribosomes.</text>
</comment>
<comment type="subcellular location">
    <subcellularLocation>
        <location evidence="1">Cytoplasm</location>
    </subcellularLocation>
</comment>
<comment type="similarity">
    <text evidence="1">Belongs to the RbfA family.</text>
</comment>
<name>RBFA_LEGPA</name>
<organism>
    <name type="scientific">Legionella pneumophila (strain Paris)</name>
    <dbReference type="NCBI Taxonomy" id="297246"/>
    <lineage>
        <taxon>Bacteria</taxon>
        <taxon>Pseudomonadati</taxon>
        <taxon>Pseudomonadota</taxon>
        <taxon>Gammaproteobacteria</taxon>
        <taxon>Legionellales</taxon>
        <taxon>Legionellaceae</taxon>
        <taxon>Legionella</taxon>
    </lineage>
</organism>